<reference key="1">
    <citation type="journal article" date="1998" name="Plant Mol. Biol.">
        <title>Arabidopsis thaliana contains a large family of germin-like proteins: characterization of cDNA and genomic sequences encoding 12 unique family members.</title>
        <authorList>
            <person name="Carter C."/>
            <person name="Graham R.A."/>
            <person name="Thornburg R.W."/>
        </authorList>
    </citation>
    <scope>NUCLEOTIDE SEQUENCE [MRNA]</scope>
    <source>
        <strain>cv. Columbia</strain>
    </source>
</reference>
<reference key="2">
    <citation type="journal article" date="2000" name="Nature">
        <title>Sequence and analysis of chromosome 3 of the plant Arabidopsis thaliana.</title>
        <authorList>
            <person name="Salanoubat M."/>
            <person name="Lemcke K."/>
            <person name="Rieger M."/>
            <person name="Ansorge W."/>
            <person name="Unseld M."/>
            <person name="Fartmann B."/>
            <person name="Valle G."/>
            <person name="Bloecker H."/>
            <person name="Perez-Alonso M."/>
            <person name="Obermaier B."/>
            <person name="Delseny M."/>
            <person name="Boutry M."/>
            <person name="Grivell L.A."/>
            <person name="Mache R."/>
            <person name="Puigdomenech P."/>
            <person name="De Simone V."/>
            <person name="Choisne N."/>
            <person name="Artiguenave F."/>
            <person name="Robert C."/>
            <person name="Brottier P."/>
            <person name="Wincker P."/>
            <person name="Cattolico L."/>
            <person name="Weissenbach J."/>
            <person name="Saurin W."/>
            <person name="Quetier F."/>
            <person name="Schaefer M."/>
            <person name="Mueller-Auer S."/>
            <person name="Gabel C."/>
            <person name="Fuchs M."/>
            <person name="Benes V."/>
            <person name="Wurmbach E."/>
            <person name="Drzonek H."/>
            <person name="Erfle H."/>
            <person name="Jordan N."/>
            <person name="Bangert S."/>
            <person name="Wiedelmann R."/>
            <person name="Kranz H."/>
            <person name="Voss H."/>
            <person name="Holland R."/>
            <person name="Brandt P."/>
            <person name="Nyakatura G."/>
            <person name="Vezzi A."/>
            <person name="D'Angelo M."/>
            <person name="Pallavicini A."/>
            <person name="Toppo S."/>
            <person name="Simionati B."/>
            <person name="Conrad A."/>
            <person name="Hornischer K."/>
            <person name="Kauer G."/>
            <person name="Loehnert T.-H."/>
            <person name="Nordsiek G."/>
            <person name="Reichelt J."/>
            <person name="Scharfe M."/>
            <person name="Schoen O."/>
            <person name="Bargues M."/>
            <person name="Terol J."/>
            <person name="Climent J."/>
            <person name="Navarro P."/>
            <person name="Collado C."/>
            <person name="Perez-Perez A."/>
            <person name="Ottenwaelder B."/>
            <person name="Duchemin D."/>
            <person name="Cooke R."/>
            <person name="Laudie M."/>
            <person name="Berger-Llauro C."/>
            <person name="Purnelle B."/>
            <person name="Masuy D."/>
            <person name="de Haan M."/>
            <person name="Maarse A.C."/>
            <person name="Alcaraz J.-P."/>
            <person name="Cottet A."/>
            <person name="Casacuberta E."/>
            <person name="Monfort A."/>
            <person name="Argiriou A."/>
            <person name="Flores M."/>
            <person name="Liguori R."/>
            <person name="Vitale D."/>
            <person name="Mannhaupt G."/>
            <person name="Haase D."/>
            <person name="Schoof H."/>
            <person name="Rudd S."/>
            <person name="Zaccaria P."/>
            <person name="Mewes H.-W."/>
            <person name="Mayer K.F.X."/>
            <person name="Kaul S."/>
            <person name="Town C.D."/>
            <person name="Koo H.L."/>
            <person name="Tallon L.J."/>
            <person name="Jenkins J."/>
            <person name="Rooney T."/>
            <person name="Rizzo M."/>
            <person name="Walts A."/>
            <person name="Utterback T."/>
            <person name="Fujii C.Y."/>
            <person name="Shea T.P."/>
            <person name="Creasy T.H."/>
            <person name="Haas B."/>
            <person name="Maiti R."/>
            <person name="Wu D."/>
            <person name="Peterson J."/>
            <person name="Van Aken S."/>
            <person name="Pai G."/>
            <person name="Militscher J."/>
            <person name="Sellers P."/>
            <person name="Gill J.E."/>
            <person name="Feldblyum T.V."/>
            <person name="Preuss D."/>
            <person name="Lin X."/>
            <person name="Nierman W.C."/>
            <person name="Salzberg S.L."/>
            <person name="White O."/>
            <person name="Venter J.C."/>
            <person name="Fraser C.M."/>
            <person name="Kaneko T."/>
            <person name="Nakamura Y."/>
            <person name="Sato S."/>
            <person name="Kato T."/>
            <person name="Asamizu E."/>
            <person name="Sasamoto S."/>
            <person name="Kimura T."/>
            <person name="Idesawa K."/>
            <person name="Kawashima K."/>
            <person name="Kishida Y."/>
            <person name="Kiyokawa C."/>
            <person name="Kohara M."/>
            <person name="Matsumoto M."/>
            <person name="Matsuno A."/>
            <person name="Muraki A."/>
            <person name="Nakayama S."/>
            <person name="Nakazaki N."/>
            <person name="Shinpo S."/>
            <person name="Takeuchi C."/>
            <person name="Wada T."/>
            <person name="Watanabe A."/>
            <person name="Yamada M."/>
            <person name="Yasuda M."/>
            <person name="Tabata S."/>
        </authorList>
    </citation>
    <scope>NUCLEOTIDE SEQUENCE [LARGE SCALE GENOMIC DNA]</scope>
    <source>
        <strain>cv. Columbia</strain>
    </source>
</reference>
<reference key="3">
    <citation type="journal article" date="2017" name="Plant J.">
        <title>Araport11: a complete reannotation of the Arabidopsis thaliana reference genome.</title>
        <authorList>
            <person name="Cheng C.Y."/>
            <person name="Krishnakumar V."/>
            <person name="Chan A.P."/>
            <person name="Thibaud-Nissen F."/>
            <person name="Schobel S."/>
            <person name="Town C.D."/>
        </authorList>
    </citation>
    <scope>GENOME REANNOTATION</scope>
    <source>
        <strain>cv. Columbia</strain>
    </source>
</reference>
<keyword id="KW-0052">Apoplast</keyword>
<keyword id="KW-1015">Disulfide bond</keyword>
<keyword id="KW-0325">Glycoprotein</keyword>
<keyword id="KW-0464">Manganese</keyword>
<keyword id="KW-0479">Metal-binding</keyword>
<keyword id="KW-1185">Reference proteome</keyword>
<keyword id="KW-0964">Secreted</keyword>
<keyword id="KW-0732">Signal</keyword>
<organism>
    <name type="scientific">Arabidopsis thaliana</name>
    <name type="common">Mouse-ear cress</name>
    <dbReference type="NCBI Taxonomy" id="3702"/>
    <lineage>
        <taxon>Eukaryota</taxon>
        <taxon>Viridiplantae</taxon>
        <taxon>Streptophyta</taxon>
        <taxon>Embryophyta</taxon>
        <taxon>Tracheophyta</taxon>
        <taxon>Spermatophyta</taxon>
        <taxon>Magnoliopsida</taxon>
        <taxon>eudicotyledons</taxon>
        <taxon>Gunneridae</taxon>
        <taxon>Pentapetalae</taxon>
        <taxon>rosids</taxon>
        <taxon>malvids</taxon>
        <taxon>Brassicales</taxon>
        <taxon>Brassicaceae</taxon>
        <taxon>Camelineae</taxon>
        <taxon>Arabidopsis</taxon>
    </lineage>
</organism>
<accession>P93000</accession>
<feature type="signal peptide" evidence="2">
    <location>
        <begin position="1"/>
        <end position="22"/>
    </location>
</feature>
<feature type="chain" id="PRO_0000010823" description="Germin-like protein subfamily 2 member 3">
    <location>
        <begin position="23"/>
        <end position="219"/>
    </location>
</feature>
<feature type="domain" description="Cupin type-1" evidence="2">
    <location>
        <begin position="60"/>
        <end position="209"/>
    </location>
</feature>
<feature type="binding site" evidence="1">
    <location>
        <position position="109"/>
    </location>
    <ligand>
        <name>Mn(2+)</name>
        <dbReference type="ChEBI" id="CHEBI:29035"/>
    </ligand>
</feature>
<feature type="binding site" evidence="1">
    <location>
        <position position="111"/>
    </location>
    <ligand>
        <name>Mn(2+)</name>
        <dbReference type="ChEBI" id="CHEBI:29035"/>
    </ligand>
</feature>
<feature type="binding site" evidence="1">
    <location>
        <position position="116"/>
    </location>
    <ligand>
        <name>Mn(2+)</name>
        <dbReference type="ChEBI" id="CHEBI:29035"/>
    </ligand>
</feature>
<feature type="binding site" evidence="1">
    <location>
        <position position="155"/>
    </location>
    <ligand>
        <name>Mn(2+)</name>
        <dbReference type="ChEBI" id="CHEBI:29035"/>
    </ligand>
</feature>
<feature type="glycosylation site" description="N-linked (GlcNAc...) asparagine" evidence="2">
    <location>
        <position position="70"/>
    </location>
</feature>
<feature type="disulfide bond" evidence="1">
    <location>
        <begin position="31"/>
        <end position="46"/>
    </location>
</feature>
<sequence length="219" mass="23033">MATSMIPIFVTFMLVAAHMALADTNMLQDFCVADLSNGLKVNGYPCKDPAKVTPEDFYFIGLATAAATANSSMGSAVTGANVEKVPGLNTLGVSISRIDYAPGGLNPPHLHPRASEAIFVLEGRLFVGFLTTTGKLISKHVNKGDVFVFPKALLHFQQNPNKAPASVLAAFDSQLPGTQVVGPSLFGSNPPIPDDLLAKAFGAAAPEIQKIKGKFPPKK</sequence>
<name>GL23_ARATH</name>
<evidence type="ECO:0000250" key="1"/>
<evidence type="ECO:0000255" key="2"/>
<evidence type="ECO:0000305" key="3"/>
<comment type="function">
    <text>May play a role in plant defense. Probably has no oxalate oxidase activity even if the active site is conserved.</text>
</comment>
<comment type="subunit">
    <text evidence="1">Oligomer (believed to be a pentamer but probably hexamer).</text>
</comment>
<comment type="subcellular location">
    <subcellularLocation>
        <location evidence="1">Secreted</location>
        <location evidence="1">Extracellular space</location>
        <location evidence="1">Apoplast</location>
    </subcellularLocation>
</comment>
<comment type="similarity">
    <text evidence="3">Belongs to the germin family.</text>
</comment>
<gene>
    <name type="primary">GLP8</name>
    <name type="ordered locus">At3g05930</name>
    <name type="ORF">F10A16.23</name>
    <name type="ORF">F2O10.11</name>
</gene>
<dbReference type="EMBL" id="U75207">
    <property type="protein sequence ID" value="AAB51585.1"/>
    <property type="molecule type" value="mRNA"/>
</dbReference>
<dbReference type="EMBL" id="AC012393">
    <property type="protein sequence ID" value="AAF26095.1"/>
    <property type="molecule type" value="Genomic_DNA"/>
</dbReference>
<dbReference type="EMBL" id="AC013454">
    <property type="protein sequence ID" value="AAF23223.1"/>
    <property type="molecule type" value="Genomic_DNA"/>
</dbReference>
<dbReference type="EMBL" id="CP002686">
    <property type="protein sequence ID" value="AEE74317.1"/>
    <property type="molecule type" value="Genomic_DNA"/>
</dbReference>
<dbReference type="RefSeq" id="NP_187244.1">
    <property type="nucleotide sequence ID" value="NM_111467.3"/>
</dbReference>
<dbReference type="SMR" id="P93000"/>
<dbReference type="FunCoup" id="P93000">
    <property type="interactions" value="27"/>
</dbReference>
<dbReference type="STRING" id="3702.P93000"/>
<dbReference type="GlyCosmos" id="P93000">
    <property type="glycosylation" value="1 site, No reported glycans"/>
</dbReference>
<dbReference type="GlyGen" id="P93000">
    <property type="glycosylation" value="1 site"/>
</dbReference>
<dbReference type="PaxDb" id="3702-AT3G05930.1"/>
<dbReference type="ProteomicsDB" id="248500"/>
<dbReference type="EnsemblPlants" id="AT3G05930.1">
    <property type="protein sequence ID" value="AT3G05930.1"/>
    <property type="gene ID" value="AT3G05930"/>
</dbReference>
<dbReference type="GeneID" id="819762"/>
<dbReference type="Gramene" id="AT3G05930.1">
    <property type="protein sequence ID" value="AT3G05930.1"/>
    <property type="gene ID" value="AT3G05930"/>
</dbReference>
<dbReference type="KEGG" id="ath:AT3G05930"/>
<dbReference type="Araport" id="AT3G05930"/>
<dbReference type="TAIR" id="AT3G05930">
    <property type="gene designation" value="GLP8"/>
</dbReference>
<dbReference type="eggNOG" id="ENOG502QQ4A">
    <property type="taxonomic scope" value="Eukaryota"/>
</dbReference>
<dbReference type="HOGENOM" id="CLU_015790_0_3_1"/>
<dbReference type="InParanoid" id="P93000"/>
<dbReference type="OMA" id="HMAIADT"/>
<dbReference type="OrthoDB" id="1921208at2759"/>
<dbReference type="PhylomeDB" id="P93000"/>
<dbReference type="PRO" id="PR:P93000"/>
<dbReference type="Proteomes" id="UP000006548">
    <property type="component" value="Chromosome 3"/>
</dbReference>
<dbReference type="ExpressionAtlas" id="P93000">
    <property type="expression patterns" value="baseline and differential"/>
</dbReference>
<dbReference type="GO" id="GO:0048046">
    <property type="term" value="C:apoplast"/>
    <property type="evidence" value="ECO:0007669"/>
    <property type="project" value="UniProtKB-SubCell"/>
</dbReference>
<dbReference type="GO" id="GO:0030145">
    <property type="term" value="F:manganese ion binding"/>
    <property type="evidence" value="ECO:0007669"/>
    <property type="project" value="InterPro"/>
</dbReference>
<dbReference type="CDD" id="cd02241">
    <property type="entry name" value="cupin_OxOx"/>
    <property type="match status" value="1"/>
</dbReference>
<dbReference type="FunFam" id="2.60.120.10:FF:000025">
    <property type="entry name" value="germin-like protein subfamily 2 member 1"/>
    <property type="match status" value="1"/>
</dbReference>
<dbReference type="Gene3D" id="2.60.120.10">
    <property type="entry name" value="Jelly Rolls"/>
    <property type="match status" value="1"/>
</dbReference>
<dbReference type="InterPro" id="IPR006045">
    <property type="entry name" value="Cupin_1"/>
</dbReference>
<dbReference type="InterPro" id="IPR001929">
    <property type="entry name" value="Germin"/>
</dbReference>
<dbReference type="InterPro" id="IPR014710">
    <property type="entry name" value="RmlC-like_jellyroll"/>
</dbReference>
<dbReference type="InterPro" id="IPR011051">
    <property type="entry name" value="RmlC_Cupin_sf"/>
</dbReference>
<dbReference type="PANTHER" id="PTHR31238">
    <property type="entry name" value="GERMIN-LIKE PROTEIN SUBFAMILY 3 MEMBER 3"/>
    <property type="match status" value="1"/>
</dbReference>
<dbReference type="Pfam" id="PF00190">
    <property type="entry name" value="Cupin_1"/>
    <property type="match status" value="1"/>
</dbReference>
<dbReference type="PRINTS" id="PR00325">
    <property type="entry name" value="GERMIN"/>
</dbReference>
<dbReference type="SMART" id="SM00835">
    <property type="entry name" value="Cupin_1"/>
    <property type="match status" value="1"/>
</dbReference>
<dbReference type="SUPFAM" id="SSF51182">
    <property type="entry name" value="RmlC-like cupins"/>
    <property type="match status" value="1"/>
</dbReference>
<protein>
    <recommendedName>
        <fullName>Germin-like protein subfamily 2 member 3</fullName>
    </recommendedName>
</protein>
<proteinExistence type="evidence at transcript level"/>